<dbReference type="EC" id="6.1.1.20" evidence="1"/>
<dbReference type="EMBL" id="CP000026">
    <property type="protein sequence ID" value="AAV77438.1"/>
    <property type="molecule type" value="Genomic_DNA"/>
</dbReference>
<dbReference type="RefSeq" id="WP_000672404.1">
    <property type="nucleotide sequence ID" value="NC_006511.1"/>
</dbReference>
<dbReference type="SMR" id="Q5PH85"/>
<dbReference type="KEGG" id="spt:SPA1505"/>
<dbReference type="HOGENOM" id="CLU_016891_0_0_6"/>
<dbReference type="Proteomes" id="UP000008185">
    <property type="component" value="Chromosome"/>
</dbReference>
<dbReference type="GO" id="GO:0009328">
    <property type="term" value="C:phenylalanine-tRNA ligase complex"/>
    <property type="evidence" value="ECO:0007669"/>
    <property type="project" value="TreeGrafter"/>
</dbReference>
<dbReference type="GO" id="GO:0005524">
    <property type="term" value="F:ATP binding"/>
    <property type="evidence" value="ECO:0007669"/>
    <property type="project" value="UniProtKB-UniRule"/>
</dbReference>
<dbReference type="GO" id="GO:0000287">
    <property type="term" value="F:magnesium ion binding"/>
    <property type="evidence" value="ECO:0007669"/>
    <property type="project" value="UniProtKB-UniRule"/>
</dbReference>
<dbReference type="GO" id="GO:0004826">
    <property type="term" value="F:phenylalanine-tRNA ligase activity"/>
    <property type="evidence" value="ECO:0007669"/>
    <property type="project" value="UniProtKB-UniRule"/>
</dbReference>
<dbReference type="GO" id="GO:0000049">
    <property type="term" value="F:tRNA binding"/>
    <property type="evidence" value="ECO:0007669"/>
    <property type="project" value="UniProtKB-KW"/>
</dbReference>
<dbReference type="GO" id="GO:0006432">
    <property type="term" value="P:phenylalanyl-tRNA aminoacylation"/>
    <property type="evidence" value="ECO:0007669"/>
    <property type="project" value="UniProtKB-UniRule"/>
</dbReference>
<dbReference type="CDD" id="cd00769">
    <property type="entry name" value="PheRS_beta_core"/>
    <property type="match status" value="1"/>
</dbReference>
<dbReference type="CDD" id="cd02796">
    <property type="entry name" value="tRNA_bind_bactPheRS"/>
    <property type="match status" value="1"/>
</dbReference>
<dbReference type="FunFam" id="2.40.50.140:FF:000045">
    <property type="entry name" value="Phenylalanine--tRNA ligase beta subunit"/>
    <property type="match status" value="1"/>
</dbReference>
<dbReference type="FunFam" id="3.30.56.10:FF:000002">
    <property type="entry name" value="Phenylalanine--tRNA ligase beta subunit"/>
    <property type="match status" value="1"/>
</dbReference>
<dbReference type="FunFam" id="3.30.70.380:FF:000001">
    <property type="entry name" value="Phenylalanine--tRNA ligase beta subunit"/>
    <property type="match status" value="1"/>
</dbReference>
<dbReference type="FunFam" id="3.30.930.10:FF:000022">
    <property type="entry name" value="Phenylalanine--tRNA ligase beta subunit"/>
    <property type="match status" value="1"/>
</dbReference>
<dbReference type="FunFam" id="3.50.40.10:FF:000001">
    <property type="entry name" value="Phenylalanine--tRNA ligase beta subunit"/>
    <property type="match status" value="1"/>
</dbReference>
<dbReference type="Gene3D" id="3.30.56.10">
    <property type="match status" value="2"/>
</dbReference>
<dbReference type="Gene3D" id="3.30.930.10">
    <property type="entry name" value="Bira Bifunctional Protein, Domain 2"/>
    <property type="match status" value="1"/>
</dbReference>
<dbReference type="Gene3D" id="3.30.70.380">
    <property type="entry name" value="Ferrodoxin-fold anticodon-binding domain"/>
    <property type="match status" value="1"/>
</dbReference>
<dbReference type="Gene3D" id="2.40.50.140">
    <property type="entry name" value="Nucleic acid-binding proteins"/>
    <property type="match status" value="1"/>
</dbReference>
<dbReference type="Gene3D" id="3.50.40.10">
    <property type="entry name" value="Phenylalanyl-trna Synthetase, Chain B, domain 3"/>
    <property type="match status" value="1"/>
</dbReference>
<dbReference type="HAMAP" id="MF_00283">
    <property type="entry name" value="Phe_tRNA_synth_beta1"/>
    <property type="match status" value="1"/>
</dbReference>
<dbReference type="InterPro" id="IPR045864">
    <property type="entry name" value="aa-tRNA-synth_II/BPL/LPL"/>
</dbReference>
<dbReference type="InterPro" id="IPR005146">
    <property type="entry name" value="B3/B4_tRNA-bd"/>
</dbReference>
<dbReference type="InterPro" id="IPR009061">
    <property type="entry name" value="DNA-bd_dom_put_sf"/>
</dbReference>
<dbReference type="InterPro" id="IPR005121">
    <property type="entry name" value="Fdx_antiC-bd"/>
</dbReference>
<dbReference type="InterPro" id="IPR036690">
    <property type="entry name" value="Fdx_antiC-bd_sf"/>
</dbReference>
<dbReference type="InterPro" id="IPR012340">
    <property type="entry name" value="NA-bd_OB-fold"/>
</dbReference>
<dbReference type="InterPro" id="IPR045060">
    <property type="entry name" value="Phe-tRNA-ligase_IIc_bsu"/>
</dbReference>
<dbReference type="InterPro" id="IPR004532">
    <property type="entry name" value="Phe-tRNA-ligase_IIc_bsu_bact"/>
</dbReference>
<dbReference type="InterPro" id="IPR020825">
    <property type="entry name" value="Phe-tRNA_synthase-like_B3/B4"/>
</dbReference>
<dbReference type="InterPro" id="IPR041616">
    <property type="entry name" value="PheRS_beta_core"/>
</dbReference>
<dbReference type="InterPro" id="IPR002547">
    <property type="entry name" value="tRNA-bd_dom"/>
</dbReference>
<dbReference type="InterPro" id="IPR033714">
    <property type="entry name" value="tRNA_bind_bactPheRS"/>
</dbReference>
<dbReference type="InterPro" id="IPR005147">
    <property type="entry name" value="tRNA_synthase_B5-dom"/>
</dbReference>
<dbReference type="NCBIfam" id="TIGR00472">
    <property type="entry name" value="pheT_bact"/>
    <property type="match status" value="1"/>
</dbReference>
<dbReference type="NCBIfam" id="NF045760">
    <property type="entry name" value="YtpR"/>
    <property type="match status" value="1"/>
</dbReference>
<dbReference type="PANTHER" id="PTHR10947:SF0">
    <property type="entry name" value="PHENYLALANINE--TRNA LIGASE BETA SUBUNIT"/>
    <property type="match status" value="1"/>
</dbReference>
<dbReference type="PANTHER" id="PTHR10947">
    <property type="entry name" value="PHENYLALANYL-TRNA SYNTHETASE BETA CHAIN AND LEUCINE-RICH REPEAT-CONTAINING PROTEIN 47"/>
    <property type="match status" value="1"/>
</dbReference>
<dbReference type="Pfam" id="PF03483">
    <property type="entry name" value="B3_4"/>
    <property type="match status" value="1"/>
</dbReference>
<dbReference type="Pfam" id="PF03484">
    <property type="entry name" value="B5"/>
    <property type="match status" value="1"/>
</dbReference>
<dbReference type="Pfam" id="PF03147">
    <property type="entry name" value="FDX-ACB"/>
    <property type="match status" value="1"/>
</dbReference>
<dbReference type="Pfam" id="PF01588">
    <property type="entry name" value="tRNA_bind"/>
    <property type="match status" value="1"/>
</dbReference>
<dbReference type="Pfam" id="PF17759">
    <property type="entry name" value="tRNA_synthFbeta"/>
    <property type="match status" value="1"/>
</dbReference>
<dbReference type="SMART" id="SM00873">
    <property type="entry name" value="B3_4"/>
    <property type="match status" value="1"/>
</dbReference>
<dbReference type="SMART" id="SM00874">
    <property type="entry name" value="B5"/>
    <property type="match status" value="1"/>
</dbReference>
<dbReference type="SMART" id="SM00896">
    <property type="entry name" value="FDX-ACB"/>
    <property type="match status" value="1"/>
</dbReference>
<dbReference type="SUPFAM" id="SSF54991">
    <property type="entry name" value="Anticodon-binding domain of PheRS"/>
    <property type="match status" value="1"/>
</dbReference>
<dbReference type="SUPFAM" id="SSF55681">
    <property type="entry name" value="Class II aaRS and biotin synthetases"/>
    <property type="match status" value="1"/>
</dbReference>
<dbReference type="SUPFAM" id="SSF50249">
    <property type="entry name" value="Nucleic acid-binding proteins"/>
    <property type="match status" value="1"/>
</dbReference>
<dbReference type="SUPFAM" id="SSF56037">
    <property type="entry name" value="PheT/TilS domain"/>
    <property type="match status" value="1"/>
</dbReference>
<dbReference type="SUPFAM" id="SSF46955">
    <property type="entry name" value="Putative DNA-binding domain"/>
    <property type="match status" value="1"/>
</dbReference>
<dbReference type="PROSITE" id="PS51483">
    <property type="entry name" value="B5"/>
    <property type="match status" value="1"/>
</dbReference>
<dbReference type="PROSITE" id="PS51447">
    <property type="entry name" value="FDX_ACB"/>
    <property type="match status" value="1"/>
</dbReference>
<dbReference type="PROSITE" id="PS50886">
    <property type="entry name" value="TRBD"/>
    <property type="match status" value="1"/>
</dbReference>
<evidence type="ECO:0000255" key="1">
    <source>
        <dbReference type="HAMAP-Rule" id="MF_00283"/>
    </source>
</evidence>
<feature type="chain" id="PRO_0000126942" description="Phenylalanine--tRNA ligase beta subunit">
    <location>
        <begin position="1"/>
        <end position="795"/>
    </location>
</feature>
<feature type="domain" description="tRNA-binding" evidence="1">
    <location>
        <begin position="39"/>
        <end position="148"/>
    </location>
</feature>
<feature type="domain" description="B5" evidence="1">
    <location>
        <begin position="401"/>
        <end position="476"/>
    </location>
</feature>
<feature type="domain" description="FDX-ACB" evidence="1">
    <location>
        <begin position="701"/>
        <end position="794"/>
    </location>
</feature>
<feature type="binding site" evidence="1">
    <location>
        <position position="454"/>
    </location>
    <ligand>
        <name>Mg(2+)</name>
        <dbReference type="ChEBI" id="CHEBI:18420"/>
        <note>shared with alpha subunit</note>
    </ligand>
</feature>
<feature type="binding site" evidence="1">
    <location>
        <position position="460"/>
    </location>
    <ligand>
        <name>Mg(2+)</name>
        <dbReference type="ChEBI" id="CHEBI:18420"/>
        <note>shared with alpha subunit</note>
    </ligand>
</feature>
<feature type="binding site" evidence="1">
    <location>
        <position position="463"/>
    </location>
    <ligand>
        <name>Mg(2+)</name>
        <dbReference type="ChEBI" id="CHEBI:18420"/>
        <note>shared with alpha subunit</note>
    </ligand>
</feature>
<feature type="binding site" evidence="1">
    <location>
        <position position="464"/>
    </location>
    <ligand>
        <name>Mg(2+)</name>
        <dbReference type="ChEBI" id="CHEBI:18420"/>
        <note>shared with alpha subunit</note>
    </ligand>
</feature>
<keyword id="KW-0030">Aminoacyl-tRNA synthetase</keyword>
<keyword id="KW-0067">ATP-binding</keyword>
<keyword id="KW-0963">Cytoplasm</keyword>
<keyword id="KW-0436">Ligase</keyword>
<keyword id="KW-0460">Magnesium</keyword>
<keyword id="KW-0479">Metal-binding</keyword>
<keyword id="KW-0547">Nucleotide-binding</keyword>
<keyword id="KW-0648">Protein biosynthesis</keyword>
<keyword id="KW-0694">RNA-binding</keyword>
<keyword id="KW-0820">tRNA-binding</keyword>
<name>SYFB_SALPA</name>
<reference key="1">
    <citation type="journal article" date="2004" name="Nat. Genet.">
        <title>Comparison of genome degradation in Paratyphi A and Typhi, human-restricted serovars of Salmonella enterica that cause typhoid.</title>
        <authorList>
            <person name="McClelland M."/>
            <person name="Sanderson K.E."/>
            <person name="Clifton S.W."/>
            <person name="Latreille P."/>
            <person name="Porwollik S."/>
            <person name="Sabo A."/>
            <person name="Meyer R."/>
            <person name="Bieri T."/>
            <person name="Ozersky P."/>
            <person name="McLellan M."/>
            <person name="Harkins C.R."/>
            <person name="Wang C."/>
            <person name="Nguyen C."/>
            <person name="Berghoff A."/>
            <person name="Elliott G."/>
            <person name="Kohlberg S."/>
            <person name="Strong C."/>
            <person name="Du F."/>
            <person name="Carter J."/>
            <person name="Kremizki C."/>
            <person name="Layman D."/>
            <person name="Leonard S."/>
            <person name="Sun H."/>
            <person name="Fulton L."/>
            <person name="Nash W."/>
            <person name="Miner T."/>
            <person name="Minx P."/>
            <person name="Delehaunty K."/>
            <person name="Fronick C."/>
            <person name="Magrini V."/>
            <person name="Nhan M."/>
            <person name="Warren W."/>
            <person name="Florea L."/>
            <person name="Spieth J."/>
            <person name="Wilson R.K."/>
        </authorList>
    </citation>
    <scope>NUCLEOTIDE SEQUENCE [LARGE SCALE GENOMIC DNA]</scope>
    <source>
        <strain>ATCC 9150 / SARB42</strain>
    </source>
</reference>
<proteinExistence type="inferred from homology"/>
<sequence length="795" mass="87281">MKFSELWLREWVNPAIDSDALANQITMAGLEVDGVEPVAGSFNGVVVGEVVECAQHPNADKLRVTKVNVGGERLLDIVCGAPNCRQGLKVAVATIGAILPGDFKIKAAKLRGEPSEGMLCSFSELGISDDHSGIIELPADAPLGTDIREYLKLDDNTIEISVTPNRADCLGIIGVARDVAVLNKAPLQEPEMAPVTATISDTLPITVEAADACPRYLGRVVKGINVNAPTPLWMKEKLRRCGIRSIDAVVDVTNYVLLELGQPMHAFDKDRIDGGIVVRMAKEGETVVLLDGSEATLNADTLVIADHHKALGIAGIFGGEHSGVNGETQNVLLECAYFNPLSITGRARRHGLHTDASHRYERGVDPALQYKAIERATRLLLDICGGDAGPIIDVSNEATLPKRATITLRRSKLDRLIGHHIADEQVSDILRRLGCEVTEGQDEWKAVAPTWRFDMEIEEDLVEEVVRVYGYNNIPDEPIQAGLIMGTHREADLSLKRVKTMLNDKGYQEVITYSFVDPKVQQLIHPGAEALLLPNPISVEMSAMRLSLWSGLLATVVYNQNRQQNRVRIFETGLRFVPDTQANLGIRQDLMLAGVICGNRYDEHWNLAKETVDFYDLKGDLEAVLDLTGKLGDIQFKAEMNPALHPGQSAAIYLKDERIGFIGVVHPELERKLDLNGRTLVFELEWNKLADRIVPQAREISRFPANRRDIAVVVAENVPAADILSECKKVGVNQVVGVNLFDVYRGKGVAEGYKSLAISLILQDTNRTLEEEEIAATVAKCVEALKERFQASLRD</sequence>
<organism>
    <name type="scientific">Salmonella paratyphi A (strain ATCC 9150 / SARB42)</name>
    <dbReference type="NCBI Taxonomy" id="295319"/>
    <lineage>
        <taxon>Bacteria</taxon>
        <taxon>Pseudomonadati</taxon>
        <taxon>Pseudomonadota</taxon>
        <taxon>Gammaproteobacteria</taxon>
        <taxon>Enterobacterales</taxon>
        <taxon>Enterobacteriaceae</taxon>
        <taxon>Salmonella</taxon>
    </lineage>
</organism>
<gene>
    <name evidence="1" type="primary">pheT</name>
    <name type="ordered locus">SPA1505</name>
</gene>
<protein>
    <recommendedName>
        <fullName evidence="1">Phenylalanine--tRNA ligase beta subunit</fullName>
        <ecNumber evidence="1">6.1.1.20</ecNumber>
    </recommendedName>
    <alternativeName>
        <fullName evidence="1">Phenylalanyl-tRNA synthetase beta subunit</fullName>
        <shortName evidence="1">PheRS</shortName>
    </alternativeName>
</protein>
<accession>Q5PH85</accession>
<comment type="catalytic activity">
    <reaction evidence="1">
        <text>tRNA(Phe) + L-phenylalanine + ATP = L-phenylalanyl-tRNA(Phe) + AMP + diphosphate + H(+)</text>
        <dbReference type="Rhea" id="RHEA:19413"/>
        <dbReference type="Rhea" id="RHEA-COMP:9668"/>
        <dbReference type="Rhea" id="RHEA-COMP:9699"/>
        <dbReference type="ChEBI" id="CHEBI:15378"/>
        <dbReference type="ChEBI" id="CHEBI:30616"/>
        <dbReference type="ChEBI" id="CHEBI:33019"/>
        <dbReference type="ChEBI" id="CHEBI:58095"/>
        <dbReference type="ChEBI" id="CHEBI:78442"/>
        <dbReference type="ChEBI" id="CHEBI:78531"/>
        <dbReference type="ChEBI" id="CHEBI:456215"/>
        <dbReference type="EC" id="6.1.1.20"/>
    </reaction>
</comment>
<comment type="cofactor">
    <cofactor evidence="1">
        <name>Mg(2+)</name>
        <dbReference type="ChEBI" id="CHEBI:18420"/>
    </cofactor>
    <text evidence="1">Binds 2 magnesium ions per tetramer.</text>
</comment>
<comment type="subunit">
    <text evidence="1">Tetramer of two alpha and two beta subunits.</text>
</comment>
<comment type="subcellular location">
    <subcellularLocation>
        <location evidence="1">Cytoplasm</location>
    </subcellularLocation>
</comment>
<comment type="similarity">
    <text evidence="1">Belongs to the phenylalanyl-tRNA synthetase beta subunit family. Type 1 subfamily.</text>
</comment>